<protein>
    <recommendedName>
        <fullName evidence="1 5">Phosphoenolpyruvate transferase</fullName>
        <ecNumber evidence="1 3">2.7.8.28</ecNumber>
    </recommendedName>
    <alternativeName>
        <fullName evidence="1">EPPG:FO PEP transferase</fullName>
    </alternativeName>
</protein>
<comment type="function">
    <text evidence="1 3">Catalyzes the transfer of the phosphoenolpyruvate moiety from enoylpyruvoyl-2-diphospho-5'-guanosine (EPPG) to 7,8-didemethyl-8-hydroxy-5-deazariboflavin (FO) with the formation of dehydro coenzyme F420-0 and GMP.</text>
</comment>
<comment type="catalytic activity">
    <reaction evidence="1 3">
        <text>enolpyruvoyl-2-diphospho-5'-guanosine + 7,8-didemethyl-8-hydroxy-5-deazariboflavin = dehydro coenzyme F420-0 + GMP + H(+)</text>
        <dbReference type="Rhea" id="RHEA:27510"/>
        <dbReference type="ChEBI" id="CHEBI:15378"/>
        <dbReference type="ChEBI" id="CHEBI:58115"/>
        <dbReference type="ChEBI" id="CHEBI:59904"/>
        <dbReference type="ChEBI" id="CHEBI:143701"/>
        <dbReference type="ChEBI" id="CHEBI:143705"/>
        <dbReference type="EC" id="2.7.8.28"/>
    </reaction>
</comment>
<comment type="cofactor">
    <cofactor evidence="1">
        <name>Mg(2+)</name>
        <dbReference type="ChEBI" id="CHEBI:18420"/>
    </cofactor>
</comment>
<comment type="pathway">
    <text evidence="1">Cofactor biosynthesis; coenzyme F420 biosynthesis.</text>
</comment>
<comment type="subunit">
    <text evidence="1">Homodimer.</text>
</comment>
<comment type="miscellaneous">
    <text evidence="4">Inhibits intracellular mycobacterial growth by inducing apoptosis in infected macrophages. Induces macrophage apoptosis by triggering reactive oxygen species (ROS) production, release of cytochrome c, and activation of caspase-3 via a TLR4-dependent pathway. FbiA-mediated apoptosis may act as a host defense response.</text>
</comment>
<comment type="miscellaneous">
    <text evidence="2">Was identified as a high-confidence drug target.</text>
</comment>
<comment type="similarity">
    <text evidence="1">Belongs to the CofD family.</text>
</comment>
<name>FBIA_MYCTU</name>
<keyword id="KW-0460">Magnesium</keyword>
<keyword id="KW-1185">Reference proteome</keyword>
<keyword id="KW-0808">Transferase</keyword>
<sequence>MKVTVLAGGVGGARFLLGVQQLLGLGQFAANSAHSDADHQLSAVVNVGDDAWIHGLRVCPDLDTCMYTLGGGVDPQRGWGQRDETWHAMQELVRYGVQPDWFELGDRDLATHLVRTQMLQAGYPLSQITEALCDRWQPGARLLPATDDRCETHVVITDPVDESRKAIHFQEWWVRYRAQVPTHSFAFVGAEKSSAATEAIAALADADIIMLAPSNPVVSIGAILAVPGIRAALREATAPIVGYSPIIGEKPLRGMADTCLSVIGVDSTAAAVGRHYGARCATGILDCWLVHDGDHAEIDGVTVRSVPLLMTDPNATAEMVRAGCDLAGVVA</sequence>
<accession>P9WP81</accession>
<accession>L0TET5</accession>
<accession>P96866</accession>
<accession>Q7D5T6</accession>
<organism>
    <name type="scientific">Mycobacterium tuberculosis (strain ATCC 25618 / H37Rv)</name>
    <dbReference type="NCBI Taxonomy" id="83332"/>
    <lineage>
        <taxon>Bacteria</taxon>
        <taxon>Bacillati</taxon>
        <taxon>Actinomycetota</taxon>
        <taxon>Actinomycetes</taxon>
        <taxon>Mycobacteriales</taxon>
        <taxon>Mycobacteriaceae</taxon>
        <taxon>Mycobacterium</taxon>
        <taxon>Mycobacterium tuberculosis complex</taxon>
    </lineage>
</organism>
<proteinExistence type="evidence at protein level"/>
<dbReference type="EC" id="2.7.8.28" evidence="1 3"/>
<dbReference type="EMBL" id="AL123456">
    <property type="protein sequence ID" value="CCP46080.1"/>
    <property type="molecule type" value="Genomic_DNA"/>
</dbReference>
<dbReference type="PIR" id="F70977">
    <property type="entry name" value="F70977"/>
</dbReference>
<dbReference type="RefSeq" id="NP_217778.1">
    <property type="nucleotide sequence ID" value="NC_000962.3"/>
</dbReference>
<dbReference type="SMR" id="P9WP81"/>
<dbReference type="FunCoup" id="P9WP81">
    <property type="interactions" value="133"/>
</dbReference>
<dbReference type="STRING" id="83332.Rv3261"/>
<dbReference type="PaxDb" id="83332-Rv3261"/>
<dbReference type="DNASU" id="888701"/>
<dbReference type="GeneID" id="888701"/>
<dbReference type="KEGG" id="mtu:Rv3261"/>
<dbReference type="KEGG" id="mtv:RVBD_3261"/>
<dbReference type="TubercuList" id="Rv3261"/>
<dbReference type="eggNOG" id="COG0391">
    <property type="taxonomic scope" value="Bacteria"/>
</dbReference>
<dbReference type="InParanoid" id="P9WP81"/>
<dbReference type="OrthoDB" id="7466225at2"/>
<dbReference type="PhylomeDB" id="P9WP81"/>
<dbReference type="BioCyc" id="MetaCyc:G185E-7535-MONOMER"/>
<dbReference type="UniPathway" id="UPA00071"/>
<dbReference type="Proteomes" id="UP000001584">
    <property type="component" value="Chromosome"/>
</dbReference>
<dbReference type="GO" id="GO:0043743">
    <property type="term" value="F:LPPG:FO 2-phospho-L-lactate transferase activity"/>
    <property type="evidence" value="ECO:0000318"/>
    <property type="project" value="GO_Central"/>
</dbReference>
<dbReference type="GO" id="GO:0000287">
    <property type="term" value="F:magnesium ion binding"/>
    <property type="evidence" value="ECO:0007669"/>
    <property type="project" value="InterPro"/>
</dbReference>
<dbReference type="GO" id="GO:2001121">
    <property type="term" value="P:coenzyme gamma-F420-2 biosynthetic process"/>
    <property type="evidence" value="ECO:0000315"/>
    <property type="project" value="MTBBASE"/>
</dbReference>
<dbReference type="GO" id="GO:0052645">
    <property type="term" value="P:F420-0 metabolic process"/>
    <property type="evidence" value="ECO:0007669"/>
    <property type="project" value="UniProtKB-UniRule"/>
</dbReference>
<dbReference type="CDD" id="cd07186">
    <property type="entry name" value="CofD_like"/>
    <property type="match status" value="1"/>
</dbReference>
<dbReference type="FunFam" id="1.10.8.240:FF:000001">
    <property type="entry name" value="2-phospho-L-lactate transferase"/>
    <property type="match status" value="1"/>
</dbReference>
<dbReference type="FunFam" id="3.40.50.10680:FF:000001">
    <property type="entry name" value="2-phospho-L-lactate transferase"/>
    <property type="match status" value="1"/>
</dbReference>
<dbReference type="Gene3D" id="1.10.8.240">
    <property type="entry name" value="CofD-like domain"/>
    <property type="match status" value="1"/>
</dbReference>
<dbReference type="Gene3D" id="3.40.50.10680">
    <property type="entry name" value="CofD-like domains"/>
    <property type="match status" value="1"/>
</dbReference>
<dbReference type="HAMAP" id="MF_01257">
    <property type="entry name" value="CofD"/>
    <property type="match status" value="1"/>
</dbReference>
<dbReference type="InterPro" id="IPR002882">
    <property type="entry name" value="CofD"/>
</dbReference>
<dbReference type="InterPro" id="IPR038136">
    <property type="entry name" value="CofD-like_dom_sf"/>
</dbReference>
<dbReference type="InterPro" id="IPR010115">
    <property type="entry name" value="FbiA/CofD"/>
</dbReference>
<dbReference type="NCBIfam" id="TIGR01819">
    <property type="entry name" value="F420_cofD"/>
    <property type="match status" value="1"/>
</dbReference>
<dbReference type="PANTHER" id="PTHR43007">
    <property type="entry name" value="2-PHOSPHO-L-LACTATE TRANSFERASE"/>
    <property type="match status" value="1"/>
</dbReference>
<dbReference type="PANTHER" id="PTHR43007:SF1">
    <property type="entry name" value="2-PHOSPHO-L-LACTATE TRANSFERASE"/>
    <property type="match status" value="1"/>
</dbReference>
<dbReference type="Pfam" id="PF01933">
    <property type="entry name" value="CofD"/>
    <property type="match status" value="1"/>
</dbReference>
<dbReference type="SUPFAM" id="SSF142338">
    <property type="entry name" value="CofD-like"/>
    <property type="match status" value="1"/>
</dbReference>
<evidence type="ECO:0000255" key="1">
    <source>
        <dbReference type="HAMAP-Rule" id="MF_01257"/>
    </source>
</evidence>
<evidence type="ECO:0000269" key="2">
    <source>
    </source>
</evidence>
<evidence type="ECO:0000269" key="3">
    <source>
    </source>
</evidence>
<evidence type="ECO:0000269" key="4">
    <source>
    </source>
</evidence>
<evidence type="ECO:0000303" key="5">
    <source>
    </source>
</evidence>
<gene>
    <name evidence="1 5" type="primary">fbiA</name>
    <name type="ordered locus">Rv3261</name>
</gene>
<reference key="1">
    <citation type="journal article" date="1998" name="Nature">
        <title>Deciphering the biology of Mycobacterium tuberculosis from the complete genome sequence.</title>
        <authorList>
            <person name="Cole S.T."/>
            <person name="Brosch R."/>
            <person name="Parkhill J."/>
            <person name="Garnier T."/>
            <person name="Churcher C.M."/>
            <person name="Harris D.E."/>
            <person name="Gordon S.V."/>
            <person name="Eiglmeier K."/>
            <person name="Gas S."/>
            <person name="Barry C.E. III"/>
            <person name="Tekaia F."/>
            <person name="Badcock K."/>
            <person name="Basham D."/>
            <person name="Brown D."/>
            <person name="Chillingworth T."/>
            <person name="Connor R."/>
            <person name="Davies R.M."/>
            <person name="Devlin K."/>
            <person name="Feltwell T."/>
            <person name="Gentles S."/>
            <person name="Hamlin N."/>
            <person name="Holroyd S."/>
            <person name="Hornsby T."/>
            <person name="Jagels K."/>
            <person name="Krogh A."/>
            <person name="McLean J."/>
            <person name="Moule S."/>
            <person name="Murphy L.D."/>
            <person name="Oliver S."/>
            <person name="Osborne J."/>
            <person name="Quail M.A."/>
            <person name="Rajandream M.A."/>
            <person name="Rogers J."/>
            <person name="Rutter S."/>
            <person name="Seeger K."/>
            <person name="Skelton S."/>
            <person name="Squares S."/>
            <person name="Squares R."/>
            <person name="Sulston J.E."/>
            <person name="Taylor K."/>
            <person name="Whitehead S."/>
            <person name="Barrell B.G."/>
        </authorList>
    </citation>
    <scope>NUCLEOTIDE SEQUENCE [LARGE SCALE GENOMIC DNA]</scope>
    <source>
        <strain>ATCC 25618 / H37Rv</strain>
    </source>
</reference>
<reference key="2">
    <citation type="journal article" date="2008" name="BMC Syst. Biol.">
        <title>targetTB: a target identification pipeline for Mycobacterium tuberculosis through an interactome, reactome and genome-scale structural analysis.</title>
        <authorList>
            <person name="Raman K."/>
            <person name="Yeturu K."/>
            <person name="Chandra N."/>
        </authorList>
    </citation>
    <scope>IDENTIFICATION AS A DRUG TARGET [LARGE SCALE ANALYSIS]</scope>
</reference>
<reference key="3">
    <citation type="journal article" date="2011" name="Mol. Cell. Proteomics">
        <title>Proteogenomic analysis of Mycobacterium tuberculosis by high resolution mass spectrometry.</title>
        <authorList>
            <person name="Kelkar D.S."/>
            <person name="Kumar D."/>
            <person name="Kumar P."/>
            <person name="Balakrishnan L."/>
            <person name="Muthusamy B."/>
            <person name="Yadav A.K."/>
            <person name="Shrivastava P."/>
            <person name="Marimuthu A."/>
            <person name="Anand S."/>
            <person name="Sundaram H."/>
            <person name="Kingsbury R."/>
            <person name="Harsha H.C."/>
            <person name="Nair B."/>
            <person name="Prasad T.S."/>
            <person name="Chauhan D.S."/>
            <person name="Katoch K."/>
            <person name="Katoch V.M."/>
            <person name="Kumar P."/>
            <person name="Chaerkady R."/>
            <person name="Ramachandran S."/>
            <person name="Dash D."/>
            <person name="Pandey A."/>
        </authorList>
    </citation>
    <scope>IDENTIFICATION BY MASS SPECTROMETRY [LARGE SCALE ANALYSIS]</scope>
    <source>
        <strain>ATCC 25618 / H37Rv</strain>
    </source>
</reference>
<reference key="4">
    <citation type="journal article" date="2019" name="Nat. Commun.">
        <title>A revised biosynthetic pathway for the cofactor F420 in prokaryotes.</title>
        <authorList>
            <person name="Bashiri G."/>
            <person name="Antoney J."/>
            <person name="Jirgis E.N.M."/>
            <person name="Shah M.V."/>
            <person name="Ney B."/>
            <person name="Copp J."/>
            <person name="Stuteley S.M."/>
            <person name="Sreebhavan S."/>
            <person name="Palmer B."/>
            <person name="Middleditch M."/>
            <person name="Tokuriki N."/>
            <person name="Greening C."/>
            <person name="Scott C."/>
            <person name="Baker E.N."/>
            <person name="Jackson C.J."/>
        </authorList>
    </citation>
    <scope>FUNCTION</scope>
    <scope>CATALYTIC ACTIVITY</scope>
</reference>
<reference key="5">
    <citation type="journal article" date="2020" name="Cell. Immunol.">
        <title>Recombinant Rv3261 protein of Mycobacterium tuberculosis induces apoptosis through a mitochondrion-dependent pathway in macrophages and inhibits intracellular bacterial growth.</title>
        <authorList>
            <person name="Lee K.I."/>
            <person name="Choi S."/>
            <person name="Choi H.G."/>
            <person name="Kebede S.G."/>
            <person name="Dang T.B."/>
            <person name="Back Y.W."/>
            <person name="Park H.S."/>
            <person name="Kim H.J."/>
        </authorList>
    </citation>
    <scope>ROLE IN INDUCTION OF MACROPHAGE APOPTOSIS</scope>
    <source>
        <strain>ATCC 27294 / TMC 102 / H37Rv</strain>
    </source>
</reference>
<feature type="chain" id="PRO_0000145763" description="Phosphoenolpyruvate transferase">
    <location>
        <begin position="1"/>
        <end position="331"/>
    </location>
</feature>
<feature type="binding site" evidence="1">
    <location>
        <position position="63"/>
    </location>
    <ligand>
        <name>7,8-didemethyl-8-hydroxy-5-deazariboflavin</name>
        <dbReference type="ChEBI" id="CHEBI:59904"/>
    </ligand>
</feature>